<name>CMOB_PROMH</name>
<dbReference type="EC" id="2.5.1.-" evidence="1"/>
<dbReference type="EMBL" id="AM942759">
    <property type="protein sequence ID" value="CAR42394.1"/>
    <property type="molecule type" value="Genomic_DNA"/>
</dbReference>
<dbReference type="RefSeq" id="WP_004242717.1">
    <property type="nucleotide sequence ID" value="NC_010554.1"/>
</dbReference>
<dbReference type="SMR" id="B4ETP0"/>
<dbReference type="EnsemblBacteria" id="CAR42394">
    <property type="protein sequence ID" value="CAR42394"/>
    <property type="gene ID" value="PMI1108"/>
</dbReference>
<dbReference type="GeneID" id="6802517"/>
<dbReference type="KEGG" id="pmr:PMI1108"/>
<dbReference type="eggNOG" id="COG0500">
    <property type="taxonomic scope" value="Bacteria"/>
</dbReference>
<dbReference type="HOGENOM" id="CLU_052665_0_0_6"/>
<dbReference type="Proteomes" id="UP000008319">
    <property type="component" value="Chromosome"/>
</dbReference>
<dbReference type="GO" id="GO:0008168">
    <property type="term" value="F:methyltransferase activity"/>
    <property type="evidence" value="ECO:0007669"/>
    <property type="project" value="TreeGrafter"/>
</dbReference>
<dbReference type="GO" id="GO:0016765">
    <property type="term" value="F:transferase activity, transferring alkyl or aryl (other than methyl) groups"/>
    <property type="evidence" value="ECO:0007669"/>
    <property type="project" value="UniProtKB-UniRule"/>
</dbReference>
<dbReference type="GO" id="GO:0002098">
    <property type="term" value="P:tRNA wobble uridine modification"/>
    <property type="evidence" value="ECO:0007669"/>
    <property type="project" value="InterPro"/>
</dbReference>
<dbReference type="CDD" id="cd02440">
    <property type="entry name" value="AdoMet_MTases"/>
    <property type="match status" value="1"/>
</dbReference>
<dbReference type="Gene3D" id="3.40.50.150">
    <property type="entry name" value="Vaccinia Virus protein VP39"/>
    <property type="match status" value="1"/>
</dbReference>
<dbReference type="HAMAP" id="MF_01590">
    <property type="entry name" value="tRNA_carboxymethyltr_CmoB"/>
    <property type="match status" value="1"/>
</dbReference>
<dbReference type="InterPro" id="IPR010017">
    <property type="entry name" value="CmoB"/>
</dbReference>
<dbReference type="InterPro" id="IPR027555">
    <property type="entry name" value="Mo5U34_MeTrfas-like"/>
</dbReference>
<dbReference type="InterPro" id="IPR029063">
    <property type="entry name" value="SAM-dependent_MTases_sf"/>
</dbReference>
<dbReference type="NCBIfam" id="NF011650">
    <property type="entry name" value="PRK15068.1"/>
    <property type="match status" value="1"/>
</dbReference>
<dbReference type="NCBIfam" id="TIGR00452">
    <property type="entry name" value="tRNA 5-methoxyuridine(34)/uridine 5-oxyacetic acid(34) synthase CmoB"/>
    <property type="match status" value="1"/>
</dbReference>
<dbReference type="PANTHER" id="PTHR43464">
    <property type="entry name" value="METHYLTRANSFERASE"/>
    <property type="match status" value="1"/>
</dbReference>
<dbReference type="PANTHER" id="PTHR43464:SF95">
    <property type="entry name" value="TRNA U34 CARBOXYMETHYLTRANSFERASE"/>
    <property type="match status" value="1"/>
</dbReference>
<dbReference type="Pfam" id="PF08003">
    <property type="entry name" value="Methyltransf_9"/>
    <property type="match status" value="1"/>
</dbReference>
<dbReference type="SUPFAM" id="SSF53335">
    <property type="entry name" value="S-adenosyl-L-methionine-dependent methyltransferases"/>
    <property type="match status" value="1"/>
</dbReference>
<feature type="chain" id="PRO_1000201301" description="tRNA U34 carboxymethyltransferase">
    <location>
        <begin position="1"/>
        <end position="324"/>
    </location>
</feature>
<feature type="binding site" evidence="1">
    <location>
        <position position="92"/>
    </location>
    <ligand>
        <name>carboxy-S-adenosyl-L-methionine</name>
        <dbReference type="ChEBI" id="CHEBI:134278"/>
    </ligand>
</feature>
<feature type="binding site" evidence="1">
    <location>
        <position position="106"/>
    </location>
    <ligand>
        <name>carboxy-S-adenosyl-L-methionine</name>
        <dbReference type="ChEBI" id="CHEBI:134278"/>
    </ligand>
</feature>
<feature type="binding site" evidence="1">
    <location>
        <position position="111"/>
    </location>
    <ligand>
        <name>carboxy-S-adenosyl-L-methionine</name>
        <dbReference type="ChEBI" id="CHEBI:134278"/>
    </ligand>
</feature>
<feature type="binding site" evidence="1">
    <location>
        <position position="131"/>
    </location>
    <ligand>
        <name>carboxy-S-adenosyl-L-methionine</name>
        <dbReference type="ChEBI" id="CHEBI:134278"/>
    </ligand>
</feature>
<feature type="binding site" evidence="1">
    <location>
        <begin position="153"/>
        <end position="155"/>
    </location>
    <ligand>
        <name>carboxy-S-adenosyl-L-methionine</name>
        <dbReference type="ChEBI" id="CHEBI:134278"/>
    </ligand>
</feature>
<feature type="binding site" evidence="1">
    <location>
        <begin position="182"/>
        <end position="183"/>
    </location>
    <ligand>
        <name>carboxy-S-adenosyl-L-methionine</name>
        <dbReference type="ChEBI" id="CHEBI:134278"/>
    </ligand>
</feature>
<feature type="binding site" evidence="1">
    <location>
        <position position="197"/>
    </location>
    <ligand>
        <name>carboxy-S-adenosyl-L-methionine</name>
        <dbReference type="ChEBI" id="CHEBI:134278"/>
    </ligand>
</feature>
<feature type="binding site" evidence="1">
    <location>
        <position position="201"/>
    </location>
    <ligand>
        <name>carboxy-S-adenosyl-L-methionine</name>
        <dbReference type="ChEBI" id="CHEBI:134278"/>
    </ligand>
</feature>
<feature type="binding site" evidence="1">
    <location>
        <position position="316"/>
    </location>
    <ligand>
        <name>carboxy-S-adenosyl-L-methionine</name>
        <dbReference type="ChEBI" id="CHEBI:134278"/>
    </ligand>
</feature>
<keyword id="KW-1185">Reference proteome</keyword>
<keyword id="KW-0808">Transferase</keyword>
<keyword id="KW-0819">tRNA processing</keyword>
<sequence>MINFSSFYQHIAQDERLFHWLDTLPAQLSEWRAHALHGHFASWERMLENLPEITPTELNLKQGVIANKTPALSTGEQLGLTNILKALMPWRKGPFSLYGVNIDTEWRSDWKWDRVLPHLSPLKGRLVLDVGCGSGYHMWRMLGEGADFVVGIDPTQLFLCQFEAVRKLLGNDQRAHLIPVGIEQMPELNAFDTVFSMGVLYHRRSPLDHLWQLKNQLVSGGELVLESLVIDGDEFQCLIPGERYAQMRNVYFIPSAKMLKVWLEKCGFKDVRIVDENVTSLEEQRKTDWMVTDSLEAFLDPLDHTKTVEGYPAPKRAILIATKP</sequence>
<gene>
    <name evidence="1" type="primary">cmoB</name>
    <name type="ordered locus">PMI1108</name>
</gene>
<comment type="function">
    <text evidence="1">Catalyzes carboxymethyl transfer from carboxy-S-adenosyl-L-methionine (Cx-SAM) to 5-hydroxyuridine (ho5U) to form 5-carboxymethoxyuridine (cmo5U) at position 34 in tRNAs.</text>
</comment>
<comment type="catalytic activity">
    <reaction evidence="1">
        <text>carboxy-S-adenosyl-L-methionine + 5-hydroxyuridine(34) in tRNA = 5-carboxymethoxyuridine(34) in tRNA + S-adenosyl-L-homocysteine + H(+)</text>
        <dbReference type="Rhea" id="RHEA:52848"/>
        <dbReference type="Rhea" id="RHEA-COMP:13381"/>
        <dbReference type="Rhea" id="RHEA-COMP:13383"/>
        <dbReference type="ChEBI" id="CHEBI:15378"/>
        <dbReference type="ChEBI" id="CHEBI:57856"/>
        <dbReference type="ChEBI" id="CHEBI:134278"/>
        <dbReference type="ChEBI" id="CHEBI:136877"/>
        <dbReference type="ChEBI" id="CHEBI:136879"/>
    </reaction>
</comment>
<comment type="subunit">
    <text evidence="1">Homotetramer.</text>
</comment>
<comment type="similarity">
    <text evidence="1">Belongs to the class I-like SAM-binding methyltransferase superfamily. CmoB family.</text>
</comment>
<accession>B4ETP0</accession>
<evidence type="ECO:0000255" key="1">
    <source>
        <dbReference type="HAMAP-Rule" id="MF_01590"/>
    </source>
</evidence>
<organism>
    <name type="scientific">Proteus mirabilis (strain HI4320)</name>
    <dbReference type="NCBI Taxonomy" id="529507"/>
    <lineage>
        <taxon>Bacteria</taxon>
        <taxon>Pseudomonadati</taxon>
        <taxon>Pseudomonadota</taxon>
        <taxon>Gammaproteobacteria</taxon>
        <taxon>Enterobacterales</taxon>
        <taxon>Morganellaceae</taxon>
        <taxon>Proteus</taxon>
    </lineage>
</organism>
<reference key="1">
    <citation type="journal article" date="2008" name="J. Bacteriol.">
        <title>Complete genome sequence of uropathogenic Proteus mirabilis, a master of both adherence and motility.</title>
        <authorList>
            <person name="Pearson M.M."/>
            <person name="Sebaihia M."/>
            <person name="Churcher C."/>
            <person name="Quail M.A."/>
            <person name="Seshasayee A.S."/>
            <person name="Luscombe N.M."/>
            <person name="Abdellah Z."/>
            <person name="Arrosmith C."/>
            <person name="Atkin B."/>
            <person name="Chillingworth T."/>
            <person name="Hauser H."/>
            <person name="Jagels K."/>
            <person name="Moule S."/>
            <person name="Mungall K."/>
            <person name="Norbertczak H."/>
            <person name="Rabbinowitsch E."/>
            <person name="Walker D."/>
            <person name="Whithead S."/>
            <person name="Thomson N.R."/>
            <person name="Rather P.N."/>
            <person name="Parkhill J."/>
            <person name="Mobley H.L.T."/>
        </authorList>
    </citation>
    <scope>NUCLEOTIDE SEQUENCE [LARGE SCALE GENOMIC DNA]</scope>
    <source>
        <strain>HI4320</strain>
    </source>
</reference>
<proteinExistence type="inferred from homology"/>
<protein>
    <recommendedName>
        <fullName evidence="1">tRNA U34 carboxymethyltransferase</fullName>
        <ecNumber evidence="1">2.5.1.-</ecNumber>
    </recommendedName>
</protein>